<comment type="function">
    <text>Required for bacteriochlorophyll biosynthesis. Directly involved in the assembly of both the B875 and B800-850 pigment-protein complexes.</text>
</comment>
<comment type="similarity">
    <text evidence="1">Belongs to the PufQ family.</text>
</comment>
<evidence type="ECO:0000305" key="1"/>
<organism>
    <name type="scientific">Rhodovulum sulfidophilum</name>
    <name type="common">Rhodobacter sulfidophilus</name>
    <dbReference type="NCBI Taxonomy" id="35806"/>
    <lineage>
        <taxon>Bacteria</taxon>
        <taxon>Pseudomonadati</taxon>
        <taxon>Pseudomonadota</taxon>
        <taxon>Alphaproteobacteria</taxon>
        <taxon>Rhodobacterales</taxon>
        <taxon>Paracoccaceae</taxon>
        <taxon>Rhodovulum</taxon>
    </lineage>
</organism>
<feature type="chain" id="PRO_0000097103" description="Protein PufQ">
    <location>
        <begin position="1"/>
        <end position="73"/>
    </location>
</feature>
<reference key="1">
    <citation type="journal article" date="1999" name="J. Biol. Chem.">
        <title>A new cytochrome subunit bound to the photosynthetic reaction center in the purple bacterium, Rhodovulum sulfidophilum.</title>
        <authorList>
            <person name="Masuda S."/>
            <person name="Yoshida M."/>
            <person name="Nagashima K.V.P."/>
            <person name="Shimada K."/>
            <person name="Matsuura K."/>
        </authorList>
    </citation>
    <scope>NUCLEOTIDE SEQUENCE [GENOMIC DNA]</scope>
</reference>
<accession>Q9WXD8</accession>
<name>PUFQ_RHOSU</name>
<sequence length="73" mass="8181">MTDQTSDVHMVRGHRPPKAEFMVYFTIIFIAALPLAFIASFLAMVRQGDLKTKGPIARAWSQARIITPMIFSA</sequence>
<gene>
    <name type="primary">pufQ</name>
</gene>
<proteinExistence type="inferred from homology"/>
<keyword id="KW-0077">Bacteriochlorophyll biosynthesis</keyword>
<keyword id="KW-0149">Chlorophyll biosynthesis</keyword>
<keyword id="KW-0602">Photosynthesis</keyword>
<dbReference type="EMBL" id="AB020784">
    <property type="protein sequence ID" value="BAA76944.1"/>
    <property type="molecule type" value="Genomic_DNA"/>
</dbReference>
<dbReference type="RefSeq" id="WP_042458386.1">
    <property type="nucleotide sequence ID" value="NZ_NHRZ01000062.1"/>
</dbReference>
<dbReference type="STRING" id="35806.A6024_04270"/>
<dbReference type="OrthoDB" id="7872505at2"/>
<dbReference type="GO" id="GO:0030494">
    <property type="term" value="P:bacteriochlorophyll biosynthetic process"/>
    <property type="evidence" value="ECO:0007669"/>
    <property type="project" value="UniProtKB-KW"/>
</dbReference>
<dbReference type="GO" id="GO:0015979">
    <property type="term" value="P:photosynthesis"/>
    <property type="evidence" value="ECO:0007669"/>
    <property type="project" value="UniProtKB-KW"/>
</dbReference>
<dbReference type="InterPro" id="IPR008800">
    <property type="entry name" value="PufQ_cyt-su"/>
</dbReference>
<dbReference type="Pfam" id="PF05398">
    <property type="entry name" value="PufQ"/>
    <property type="match status" value="1"/>
</dbReference>
<dbReference type="PIRSF" id="PIRSF005825">
    <property type="entry name" value="PufQ"/>
    <property type="match status" value="1"/>
</dbReference>
<protein>
    <recommendedName>
        <fullName>Protein PufQ</fullName>
    </recommendedName>
</protein>